<reference key="1">
    <citation type="journal article" date="2008" name="Genomics">
        <title>A novel fatty acid-binding protein (FABP) gene resulting from tandem gene duplication in mammals: transcription in rat retina and testis.</title>
        <authorList>
            <person name="Liu R.Z."/>
            <person name="Li X."/>
            <person name="Godbout R."/>
        </authorList>
    </citation>
    <scope>NUCLEOTIDE SEQUENCE [MRNA]</scope>
    <scope>TISSUE SPECIFICITY</scope>
    <scope>DEVELOPMENTAL STAGE</scope>
    <source>
        <tissue>Retinoblastoma</tissue>
    </source>
</reference>
<reference key="2">
    <citation type="journal article" date="2006" name="Nature">
        <title>DNA sequence and analysis of human chromosome 8.</title>
        <authorList>
            <person name="Nusbaum C."/>
            <person name="Mikkelsen T.S."/>
            <person name="Zody M.C."/>
            <person name="Asakawa S."/>
            <person name="Taudien S."/>
            <person name="Garber M."/>
            <person name="Kodira C.D."/>
            <person name="Schueler M.G."/>
            <person name="Shimizu A."/>
            <person name="Whittaker C.A."/>
            <person name="Chang J.L."/>
            <person name="Cuomo C.A."/>
            <person name="Dewar K."/>
            <person name="FitzGerald M.G."/>
            <person name="Yang X."/>
            <person name="Allen N.R."/>
            <person name="Anderson S."/>
            <person name="Asakawa T."/>
            <person name="Blechschmidt K."/>
            <person name="Bloom T."/>
            <person name="Borowsky M.L."/>
            <person name="Butler J."/>
            <person name="Cook A."/>
            <person name="Corum B."/>
            <person name="DeArellano K."/>
            <person name="DeCaprio D."/>
            <person name="Dooley K.T."/>
            <person name="Dorris L. III"/>
            <person name="Engels R."/>
            <person name="Gloeckner G."/>
            <person name="Hafez N."/>
            <person name="Hagopian D.S."/>
            <person name="Hall J.L."/>
            <person name="Ishikawa S.K."/>
            <person name="Jaffe D.B."/>
            <person name="Kamat A."/>
            <person name="Kudoh J."/>
            <person name="Lehmann R."/>
            <person name="Lokitsang T."/>
            <person name="Macdonald P."/>
            <person name="Major J.E."/>
            <person name="Matthews C.D."/>
            <person name="Mauceli E."/>
            <person name="Menzel U."/>
            <person name="Mihalev A.H."/>
            <person name="Minoshima S."/>
            <person name="Murayama Y."/>
            <person name="Naylor J.W."/>
            <person name="Nicol R."/>
            <person name="Nguyen C."/>
            <person name="O'Leary S.B."/>
            <person name="O'Neill K."/>
            <person name="Parker S.C.J."/>
            <person name="Polley A."/>
            <person name="Raymond C.K."/>
            <person name="Reichwald K."/>
            <person name="Rodriguez J."/>
            <person name="Sasaki T."/>
            <person name="Schilhabel M."/>
            <person name="Siddiqui R."/>
            <person name="Smith C.L."/>
            <person name="Sneddon T.P."/>
            <person name="Talamas J.A."/>
            <person name="Tenzin P."/>
            <person name="Topham K."/>
            <person name="Venkataraman V."/>
            <person name="Wen G."/>
            <person name="Yamazaki S."/>
            <person name="Young S.K."/>
            <person name="Zeng Q."/>
            <person name="Zimmer A.R."/>
            <person name="Rosenthal A."/>
            <person name="Birren B.W."/>
            <person name="Platzer M."/>
            <person name="Shimizu N."/>
            <person name="Lander E.S."/>
        </authorList>
    </citation>
    <scope>NUCLEOTIDE SEQUENCE [LARGE SCALE GENOMIC DNA]</scope>
</reference>
<reference key="3">
    <citation type="submission" date="2005-07" db="EMBL/GenBank/DDBJ databases">
        <authorList>
            <person name="Mural R.J."/>
            <person name="Istrail S."/>
            <person name="Sutton G.G."/>
            <person name="Florea L."/>
            <person name="Halpern A.L."/>
            <person name="Mobarry C.M."/>
            <person name="Lippert R."/>
            <person name="Walenz B."/>
            <person name="Shatkay H."/>
            <person name="Dew I."/>
            <person name="Miller J.R."/>
            <person name="Flanigan M.J."/>
            <person name="Edwards N.J."/>
            <person name="Bolanos R."/>
            <person name="Fasulo D."/>
            <person name="Halldorsson B.V."/>
            <person name="Hannenhalli S."/>
            <person name="Turner R."/>
            <person name="Yooseph S."/>
            <person name="Lu F."/>
            <person name="Nusskern D.R."/>
            <person name="Shue B.C."/>
            <person name="Zheng X.H."/>
            <person name="Zhong F."/>
            <person name="Delcher A.L."/>
            <person name="Huson D.H."/>
            <person name="Kravitz S.A."/>
            <person name="Mouchard L."/>
            <person name="Reinert K."/>
            <person name="Remington K.A."/>
            <person name="Clark A.G."/>
            <person name="Waterman M.S."/>
            <person name="Eichler E.E."/>
            <person name="Adams M.D."/>
            <person name="Hunkapiller M.W."/>
            <person name="Myers E.W."/>
            <person name="Venter J.C."/>
        </authorList>
    </citation>
    <scope>NUCLEOTIDE SEQUENCE [LARGE SCALE GENOMIC DNA]</scope>
</reference>
<reference key="4">
    <citation type="journal article" date="2004" name="Genome Res.">
        <title>The status, quality, and expansion of the NIH full-length cDNA project: the Mammalian Gene Collection (MGC).</title>
        <authorList>
            <consortium name="The MGC Project Team"/>
        </authorList>
    </citation>
    <scope>NUCLEOTIDE SEQUENCE [LARGE SCALE MRNA]</scope>
</reference>
<reference key="5">
    <citation type="patent" date="2003-06-19" number="WO03050280">
        <title>Regulation of human fatty acid binding protein.</title>
        <authorList>
            <person name="Xiao Y."/>
        </authorList>
    </citation>
    <scope>NUCLEOTIDE SEQUENCE [MRNA] OF 17-140</scope>
</reference>
<protein>
    <recommendedName>
        <fullName>Fatty acid-binding protein 12</fullName>
    </recommendedName>
</protein>
<evidence type="ECO:0000250" key="1"/>
<evidence type="ECO:0000269" key="2">
    <source>
    </source>
</evidence>
<evidence type="ECO:0000305" key="3"/>
<name>FBP12_HUMAN</name>
<dbReference type="EMBL" id="EU733650">
    <property type="protein sequence ID" value="ACI03640.1"/>
    <property type="molecule type" value="mRNA"/>
</dbReference>
<dbReference type="EMBL" id="AC023644">
    <property type="status" value="NOT_ANNOTATED_CDS"/>
    <property type="molecule type" value="Genomic_DNA"/>
</dbReference>
<dbReference type="EMBL" id="CH471068">
    <property type="protein sequence ID" value="EAW87093.1"/>
    <property type="molecule type" value="Genomic_DNA"/>
</dbReference>
<dbReference type="EMBL" id="BC146973">
    <property type="protein sequence ID" value="AAI46974.1"/>
    <property type="molecule type" value="mRNA"/>
</dbReference>
<dbReference type="EMBL" id="BC146981">
    <property type="protein sequence ID" value="AAI46982.1"/>
    <property type="molecule type" value="mRNA"/>
</dbReference>
<dbReference type="EMBL" id="AX785170">
    <property type="status" value="NOT_ANNOTATED_CDS"/>
    <property type="molecule type" value="mRNA"/>
</dbReference>
<dbReference type="EMBL" id="AX785174">
    <property type="status" value="NOT_ANNOTATED_CDS"/>
    <property type="molecule type" value="mRNA"/>
</dbReference>
<dbReference type="CCDS" id="CCDS47882.1"/>
<dbReference type="RefSeq" id="NP_001098751.1">
    <property type="nucleotide sequence ID" value="NM_001105281.6"/>
</dbReference>
<dbReference type="RefSeq" id="XP_006716528.1">
    <property type="nucleotide sequence ID" value="XM_006716465.4"/>
</dbReference>
<dbReference type="RefSeq" id="XP_011515879.1">
    <property type="nucleotide sequence ID" value="XM_011517577.3"/>
</dbReference>
<dbReference type="RefSeq" id="XP_054216988.1">
    <property type="nucleotide sequence ID" value="XM_054361013.1"/>
</dbReference>
<dbReference type="RefSeq" id="XP_054216989.1">
    <property type="nucleotide sequence ID" value="XM_054361014.1"/>
</dbReference>
<dbReference type="SMR" id="A6NFH5"/>
<dbReference type="BioGRID" id="571347">
    <property type="interactions" value="1"/>
</dbReference>
<dbReference type="FunCoup" id="A6NFH5">
    <property type="interactions" value="52"/>
</dbReference>
<dbReference type="STRING" id="9606.ENSP00000353650"/>
<dbReference type="GlyGen" id="A6NFH5">
    <property type="glycosylation" value="1 site, 1 O-linked glycan (1 site)"/>
</dbReference>
<dbReference type="iPTMnet" id="A6NFH5"/>
<dbReference type="PhosphoSitePlus" id="A6NFH5"/>
<dbReference type="BioMuta" id="FABP12"/>
<dbReference type="jPOST" id="A6NFH5"/>
<dbReference type="MassIVE" id="A6NFH5"/>
<dbReference type="PaxDb" id="9606-ENSP00000353650"/>
<dbReference type="PeptideAtlas" id="A6NFH5"/>
<dbReference type="Antibodypedia" id="49988">
    <property type="antibodies" value="72 antibodies from 16 providers"/>
</dbReference>
<dbReference type="DNASU" id="646486"/>
<dbReference type="Ensembl" id="ENST00000360464.6">
    <property type="protein sequence ID" value="ENSP00000353650.4"/>
    <property type="gene ID" value="ENSG00000197416.5"/>
</dbReference>
<dbReference type="Ensembl" id="ENST00000692030.1">
    <property type="protein sequence ID" value="ENSP00000510293.1"/>
    <property type="gene ID" value="ENSG00000197416.5"/>
</dbReference>
<dbReference type="GeneID" id="646486"/>
<dbReference type="KEGG" id="hsa:646486"/>
<dbReference type="MANE-Select" id="ENST00000360464.6">
    <property type="protein sequence ID" value="ENSP00000353650.4"/>
    <property type="RefSeq nucleotide sequence ID" value="NM_001105281.6"/>
    <property type="RefSeq protein sequence ID" value="NP_001098751.1"/>
</dbReference>
<dbReference type="UCSC" id="uc011lfp.3">
    <property type="organism name" value="human"/>
</dbReference>
<dbReference type="AGR" id="HGNC:34524"/>
<dbReference type="CTD" id="646486"/>
<dbReference type="DisGeNET" id="646486"/>
<dbReference type="GeneCards" id="FABP12"/>
<dbReference type="HGNC" id="HGNC:34524">
    <property type="gene designation" value="FABP12"/>
</dbReference>
<dbReference type="HPA" id="ENSG00000197416">
    <property type="expression patterns" value="Tissue enriched (retina)"/>
</dbReference>
<dbReference type="MIM" id="618923">
    <property type="type" value="gene"/>
</dbReference>
<dbReference type="neXtProt" id="NX_A6NFH5"/>
<dbReference type="OpenTargets" id="ENSG00000197416"/>
<dbReference type="PharmGKB" id="PA164719513"/>
<dbReference type="VEuPathDB" id="HostDB:ENSG00000197416"/>
<dbReference type="eggNOG" id="KOG4015">
    <property type="taxonomic scope" value="Eukaryota"/>
</dbReference>
<dbReference type="GeneTree" id="ENSGT00940000162398"/>
<dbReference type="HOGENOM" id="CLU_113772_0_0_1"/>
<dbReference type="InParanoid" id="A6NFH5"/>
<dbReference type="OMA" id="DWDGKEN"/>
<dbReference type="OrthoDB" id="412780at2759"/>
<dbReference type="PAN-GO" id="A6NFH5">
    <property type="GO annotations" value="4 GO annotations based on evolutionary models"/>
</dbReference>
<dbReference type="PhylomeDB" id="A6NFH5"/>
<dbReference type="TreeFam" id="TF316894"/>
<dbReference type="PathwayCommons" id="A6NFH5"/>
<dbReference type="Reactome" id="R-HSA-163560">
    <property type="pathway name" value="Triglyceride catabolism"/>
</dbReference>
<dbReference type="BioGRID-ORCS" id="646486">
    <property type="hits" value="8 hits in 1132 CRISPR screens"/>
</dbReference>
<dbReference type="GenomeRNAi" id="646486"/>
<dbReference type="Pharos" id="A6NFH5">
    <property type="development level" value="Tdark"/>
</dbReference>
<dbReference type="PRO" id="PR:A6NFH5"/>
<dbReference type="Proteomes" id="UP000005640">
    <property type="component" value="Chromosome 8"/>
</dbReference>
<dbReference type="RNAct" id="A6NFH5">
    <property type="molecule type" value="protein"/>
</dbReference>
<dbReference type="Bgee" id="ENSG00000197416">
    <property type="expression patterns" value="Expressed in male germ line stem cell (sensu Vertebrata) in testis and 45 other cell types or tissues"/>
</dbReference>
<dbReference type="ExpressionAtlas" id="A6NFH5">
    <property type="expression patterns" value="baseline and differential"/>
</dbReference>
<dbReference type="GO" id="GO:0005829">
    <property type="term" value="C:cytosol"/>
    <property type="evidence" value="ECO:0000318"/>
    <property type="project" value="GO_Central"/>
</dbReference>
<dbReference type="GO" id="GO:0005634">
    <property type="term" value="C:nucleus"/>
    <property type="evidence" value="ECO:0000318"/>
    <property type="project" value="GO_Central"/>
</dbReference>
<dbReference type="GO" id="GO:0005504">
    <property type="term" value="F:fatty acid binding"/>
    <property type="evidence" value="ECO:0000318"/>
    <property type="project" value="GO_Central"/>
</dbReference>
<dbReference type="GO" id="GO:0015908">
    <property type="term" value="P:fatty acid transport"/>
    <property type="evidence" value="ECO:0000318"/>
    <property type="project" value="GO_Central"/>
</dbReference>
<dbReference type="FunFam" id="2.40.128.20:FF:000001">
    <property type="entry name" value="Fatty acid-binding protein, adipocyte"/>
    <property type="match status" value="1"/>
</dbReference>
<dbReference type="Gene3D" id="2.40.128.20">
    <property type="match status" value="1"/>
</dbReference>
<dbReference type="InterPro" id="IPR012674">
    <property type="entry name" value="Calycin"/>
</dbReference>
<dbReference type="InterPro" id="IPR000463">
    <property type="entry name" value="Fatty_acid-bd"/>
</dbReference>
<dbReference type="InterPro" id="IPR031259">
    <property type="entry name" value="ILBP"/>
</dbReference>
<dbReference type="InterPro" id="IPR000566">
    <property type="entry name" value="Lipocln_cytosolic_FA-bd_dom"/>
</dbReference>
<dbReference type="PANTHER" id="PTHR11955">
    <property type="entry name" value="FATTY ACID BINDING PROTEIN"/>
    <property type="match status" value="1"/>
</dbReference>
<dbReference type="Pfam" id="PF00061">
    <property type="entry name" value="Lipocalin"/>
    <property type="match status" value="1"/>
</dbReference>
<dbReference type="PRINTS" id="PR00178">
    <property type="entry name" value="FATTYACIDBP"/>
</dbReference>
<dbReference type="SUPFAM" id="SSF50814">
    <property type="entry name" value="Lipocalins"/>
    <property type="match status" value="1"/>
</dbReference>
<proteinExistence type="evidence at protein level"/>
<comment type="function">
    <text evidence="1">May play a role in lipid transport.</text>
</comment>
<comment type="tissue specificity">
    <text evidence="2">Expressed in a number of retinoblastoma cell lines.</text>
</comment>
<comment type="developmental stage">
    <text evidence="2">Not detected in fetal tissues.</text>
</comment>
<comment type="similarity">
    <text evidence="3">Belongs to the calycin superfamily. Fatty-acid binding protein (FABP) family.</text>
</comment>
<feature type="chain" id="PRO_0000342881" description="Fatty acid-binding protein 12">
    <location>
        <begin position="1"/>
        <end position="140"/>
    </location>
</feature>
<feature type="binding site" evidence="1">
    <location>
        <position position="107"/>
    </location>
    <ligand>
        <name>a fatty acid</name>
        <dbReference type="ChEBI" id="CHEBI:28868"/>
    </ligand>
</feature>
<feature type="binding site" evidence="1">
    <location>
        <begin position="127"/>
        <end position="129"/>
    </location>
    <ligand>
        <name>a fatty acid</name>
        <dbReference type="ChEBI" id="CHEBI:28868"/>
    </ligand>
</feature>
<gene>
    <name type="primary">FABP12</name>
</gene>
<accession>A6NFH5</accession>
<accession>B7SUN0</accession>
<keyword id="KW-0446">Lipid-binding</keyword>
<keyword id="KW-1267">Proteomics identification</keyword>
<keyword id="KW-1185">Reference proteome</keyword>
<keyword id="KW-0813">Transport</keyword>
<organism>
    <name type="scientific">Homo sapiens</name>
    <name type="common">Human</name>
    <dbReference type="NCBI Taxonomy" id="9606"/>
    <lineage>
        <taxon>Eukaryota</taxon>
        <taxon>Metazoa</taxon>
        <taxon>Chordata</taxon>
        <taxon>Craniata</taxon>
        <taxon>Vertebrata</taxon>
        <taxon>Euteleostomi</taxon>
        <taxon>Mammalia</taxon>
        <taxon>Eutheria</taxon>
        <taxon>Euarchontoglires</taxon>
        <taxon>Primates</taxon>
        <taxon>Haplorrhini</taxon>
        <taxon>Catarrhini</taxon>
        <taxon>Hominidae</taxon>
        <taxon>Homo</taxon>
    </lineage>
</organism>
<sequence>MIDQLQGTWKSISCENSEDYMKELGIGRASRKLGRLAKPTVTISTDGDVITIKTKSIFKNNEISFKLGEEFEEITPGGHKTKSKVTLDKESLIQVQDWDGKETTITRKLVDGKMVVESTVNSVICTRTYEKVSSNSVSNS</sequence>